<evidence type="ECO:0000250" key="1"/>
<evidence type="ECO:0000250" key="2">
    <source>
        <dbReference type="UniProtKB" id="Q9VT57"/>
    </source>
</evidence>
<evidence type="ECO:0000255" key="3">
    <source>
        <dbReference type="PROSITE-ProRule" id="PRU00159"/>
    </source>
</evidence>
<evidence type="ECO:0000255" key="4">
    <source>
        <dbReference type="PROSITE-ProRule" id="PRU10027"/>
    </source>
</evidence>
<evidence type="ECO:0000256" key="5">
    <source>
        <dbReference type="SAM" id="MobiDB-lite"/>
    </source>
</evidence>
<evidence type="ECO:0000305" key="6"/>
<feature type="chain" id="PRO_0000312930" description="Cyclin-dependent kinase 8">
    <location>
        <begin position="1"/>
        <end position="612"/>
    </location>
</feature>
<feature type="domain" description="Protein kinase" evidence="3">
    <location>
        <begin position="23"/>
        <end position="345"/>
    </location>
</feature>
<feature type="region of interest" description="Disordered" evidence="5">
    <location>
        <begin position="403"/>
        <end position="483"/>
    </location>
</feature>
<feature type="region of interest" description="Disordered" evidence="5">
    <location>
        <begin position="543"/>
        <end position="612"/>
    </location>
</feature>
<feature type="compositionally biased region" description="Low complexity" evidence="5">
    <location>
        <begin position="403"/>
        <end position="455"/>
    </location>
</feature>
<feature type="compositionally biased region" description="Low complexity" evidence="5">
    <location>
        <begin position="472"/>
        <end position="483"/>
    </location>
</feature>
<feature type="compositionally biased region" description="Low complexity" evidence="5">
    <location>
        <begin position="543"/>
        <end position="555"/>
    </location>
</feature>
<feature type="compositionally biased region" description="Low complexity" evidence="5">
    <location>
        <begin position="564"/>
        <end position="573"/>
    </location>
</feature>
<feature type="compositionally biased region" description="Low complexity" evidence="5">
    <location>
        <begin position="600"/>
        <end position="612"/>
    </location>
</feature>
<feature type="active site" description="Proton acceptor" evidence="3 4">
    <location>
        <position position="155"/>
    </location>
</feature>
<feature type="binding site" evidence="3">
    <location>
        <begin position="29"/>
        <end position="37"/>
    </location>
    <ligand>
        <name>ATP</name>
        <dbReference type="ChEBI" id="CHEBI:30616"/>
    </ligand>
</feature>
<feature type="binding site" evidence="3">
    <location>
        <position position="57"/>
    </location>
    <ligand>
        <name>ATP</name>
        <dbReference type="ChEBI" id="CHEBI:30616"/>
    </ligand>
</feature>
<gene>
    <name type="primary">cdk-8</name>
    <name type="ORF">CBG12346</name>
</gene>
<protein>
    <recommendedName>
        <fullName>Cyclin-dependent kinase 8</fullName>
        <ecNumber>2.7.11.22</ecNumber>
        <ecNumber>2.7.11.23</ecNumber>
    </recommendedName>
    <alternativeName>
        <fullName>Cell division protein kinase 8</fullName>
    </alternativeName>
    <alternativeName>
        <fullName>Mediator complex subunit cdk-8</fullName>
    </alternativeName>
    <alternativeName>
        <fullName>Mediator of RNA polymerase II transcription subunit cdk-8</fullName>
    </alternativeName>
</protein>
<sequence>MIDENFKKKLAVSRERVEDLFYFENSKEIGRGTYGLVYKAVPKHSNGRFPNKEYALKMIEGQGFSMSACREIALFRELRHPNLICLQRVFLTNEKKVWLLLDYAEHDLWHVIKHHRTAKTKKVPIMVPRNMVKNILFQILSGMHYLHSNWVLHRDLKPANILLMGDGGPDMRGRVKIADLGFSRIFANPLKPMAELDPVVVTFWYRAPELLLGAKHYTKAIDVWAIGCIFAELLTAEPLFFCKEEDIKAQNPYHYDQVKRIFHLLGYPSDTDWPDMKKMPDHQRLLNDARNEGTPIQTFPNSLQRYFDKWKINSQSSPYRLLVKLLTVDPLKRVSCEEAMNDIYFRKMERPPRETDDVFNRYPIPYAKKEQQITIPIDQFQQQQQQQQQQQQQQQQQQQQQQQQQMQQPQIGPPQMMGQPQMGQPQMGQPQMGQPQMGQPQMGQPQMVPSQMGQPPMGGPHPGVVAPDGHAHQMMQQQHQSQHHMQYQQMHDSMQGGMDDGGPQAKMMRMGNVPVGRYGPMGPPYGPQDFHAPQGPPMMQMMPQPGPSGYYQQRPGQPPGPGPQGYMNPQMGMTMGMRPQGVPQQAYMPGRGMPPPQGPNPQQQQQWQQYHR</sequence>
<name>CDK8_CAEBR</name>
<proteinExistence type="inferred from homology"/>
<dbReference type="EC" id="2.7.11.22"/>
<dbReference type="EC" id="2.7.11.23"/>
<dbReference type="EMBL" id="HE600913">
    <property type="protein sequence ID" value="CAP31338.3"/>
    <property type="molecule type" value="Genomic_DNA"/>
</dbReference>
<dbReference type="SMR" id="P0C661"/>
<dbReference type="FunCoup" id="P0C661">
    <property type="interactions" value="3316"/>
</dbReference>
<dbReference type="STRING" id="6238.P0C661"/>
<dbReference type="WormBase" id="CBG12346">
    <property type="protein sequence ID" value="CBP39634"/>
    <property type="gene ID" value="WBGene00033308"/>
    <property type="gene designation" value="Cbr-cdk-8"/>
</dbReference>
<dbReference type="eggNOG" id="KOG0666">
    <property type="taxonomic scope" value="Eukaryota"/>
</dbReference>
<dbReference type="HOGENOM" id="CLU_000288_181_6_1"/>
<dbReference type="InParanoid" id="P0C661"/>
<dbReference type="OMA" id="YFKNGGP"/>
<dbReference type="Proteomes" id="UP000008549">
    <property type="component" value="Unassembled WGS sequence"/>
</dbReference>
<dbReference type="GO" id="GO:0005634">
    <property type="term" value="C:nucleus"/>
    <property type="evidence" value="ECO:0000250"/>
    <property type="project" value="UniProtKB"/>
</dbReference>
<dbReference type="GO" id="GO:0005524">
    <property type="term" value="F:ATP binding"/>
    <property type="evidence" value="ECO:0007669"/>
    <property type="project" value="UniProtKB-KW"/>
</dbReference>
<dbReference type="GO" id="GO:0004693">
    <property type="term" value="F:cyclin-dependent protein serine/threonine kinase activity"/>
    <property type="evidence" value="ECO:0007669"/>
    <property type="project" value="UniProtKB-EC"/>
</dbReference>
<dbReference type="GO" id="GO:0106310">
    <property type="term" value="F:protein serine kinase activity"/>
    <property type="evidence" value="ECO:0007669"/>
    <property type="project" value="RHEA"/>
</dbReference>
<dbReference type="GO" id="GO:0004674">
    <property type="term" value="F:protein serine/threonine kinase activity"/>
    <property type="evidence" value="ECO:0000318"/>
    <property type="project" value="GO_Central"/>
</dbReference>
<dbReference type="GO" id="GO:0008353">
    <property type="term" value="F:RNA polymerase II CTD heptapeptide repeat kinase activity"/>
    <property type="evidence" value="ECO:0007669"/>
    <property type="project" value="UniProtKB-EC"/>
</dbReference>
<dbReference type="GO" id="GO:0000082">
    <property type="term" value="P:G1/S transition of mitotic cell cycle"/>
    <property type="evidence" value="ECO:0000250"/>
    <property type="project" value="UniProtKB"/>
</dbReference>
<dbReference type="GO" id="GO:0006468">
    <property type="term" value="P:protein phosphorylation"/>
    <property type="evidence" value="ECO:0000250"/>
    <property type="project" value="UniProtKB"/>
</dbReference>
<dbReference type="CDD" id="cd07842">
    <property type="entry name" value="STKc_CDK8_like"/>
    <property type="match status" value="1"/>
</dbReference>
<dbReference type="FunFam" id="3.30.200.20:FF:000707">
    <property type="entry name" value="Cyclin dependent kinase 19"/>
    <property type="match status" value="1"/>
</dbReference>
<dbReference type="FunFam" id="1.10.510.10:FF:000088">
    <property type="entry name" value="cyclin-dependent kinase 8 isoform X1"/>
    <property type="match status" value="1"/>
</dbReference>
<dbReference type="Gene3D" id="3.30.200.20">
    <property type="entry name" value="Phosphorylase Kinase, domain 1"/>
    <property type="match status" value="1"/>
</dbReference>
<dbReference type="Gene3D" id="1.10.510.10">
    <property type="entry name" value="Transferase(Phosphotransferase) domain 1"/>
    <property type="match status" value="1"/>
</dbReference>
<dbReference type="InterPro" id="IPR050108">
    <property type="entry name" value="CDK"/>
</dbReference>
<dbReference type="InterPro" id="IPR011009">
    <property type="entry name" value="Kinase-like_dom_sf"/>
</dbReference>
<dbReference type="InterPro" id="IPR000719">
    <property type="entry name" value="Prot_kinase_dom"/>
</dbReference>
<dbReference type="InterPro" id="IPR017441">
    <property type="entry name" value="Protein_kinase_ATP_BS"/>
</dbReference>
<dbReference type="InterPro" id="IPR008271">
    <property type="entry name" value="Ser/Thr_kinase_AS"/>
</dbReference>
<dbReference type="PANTHER" id="PTHR24056">
    <property type="entry name" value="CELL DIVISION PROTEIN KINASE"/>
    <property type="match status" value="1"/>
</dbReference>
<dbReference type="PANTHER" id="PTHR24056:SF495">
    <property type="entry name" value="CYCLIN-DEPENDENT KINASE 8-RELATED"/>
    <property type="match status" value="1"/>
</dbReference>
<dbReference type="Pfam" id="PF00069">
    <property type="entry name" value="Pkinase"/>
    <property type="match status" value="1"/>
</dbReference>
<dbReference type="SMART" id="SM00220">
    <property type="entry name" value="S_TKc"/>
    <property type="match status" value="1"/>
</dbReference>
<dbReference type="SUPFAM" id="SSF56112">
    <property type="entry name" value="Protein kinase-like (PK-like)"/>
    <property type="match status" value="1"/>
</dbReference>
<dbReference type="PROSITE" id="PS00107">
    <property type="entry name" value="PROTEIN_KINASE_ATP"/>
    <property type="match status" value="1"/>
</dbReference>
<dbReference type="PROSITE" id="PS50011">
    <property type="entry name" value="PROTEIN_KINASE_DOM"/>
    <property type="match status" value="1"/>
</dbReference>
<dbReference type="PROSITE" id="PS00108">
    <property type="entry name" value="PROTEIN_KINASE_ST"/>
    <property type="match status" value="1"/>
</dbReference>
<organism>
    <name type="scientific">Caenorhabditis briggsae</name>
    <dbReference type="NCBI Taxonomy" id="6238"/>
    <lineage>
        <taxon>Eukaryota</taxon>
        <taxon>Metazoa</taxon>
        <taxon>Ecdysozoa</taxon>
        <taxon>Nematoda</taxon>
        <taxon>Chromadorea</taxon>
        <taxon>Rhabditida</taxon>
        <taxon>Rhabditina</taxon>
        <taxon>Rhabditomorpha</taxon>
        <taxon>Rhabditoidea</taxon>
        <taxon>Rhabditidae</taxon>
        <taxon>Peloderinae</taxon>
        <taxon>Caenorhabditis</taxon>
    </lineage>
</organism>
<reference key="1">
    <citation type="journal article" date="2003" name="PLoS Biol.">
        <title>The genome sequence of Caenorhabditis briggsae: a platform for comparative genomics.</title>
        <authorList>
            <person name="Stein L.D."/>
            <person name="Bao Z."/>
            <person name="Blasiar D."/>
            <person name="Blumenthal T."/>
            <person name="Brent M.R."/>
            <person name="Chen N."/>
            <person name="Chinwalla A."/>
            <person name="Clarke L."/>
            <person name="Clee C."/>
            <person name="Coghlan A."/>
            <person name="Coulson A."/>
            <person name="D'Eustachio P."/>
            <person name="Fitch D.H.A."/>
            <person name="Fulton L.A."/>
            <person name="Fulton R.E."/>
            <person name="Griffiths-Jones S."/>
            <person name="Harris T.W."/>
            <person name="Hillier L.W."/>
            <person name="Kamath R."/>
            <person name="Kuwabara P.E."/>
            <person name="Mardis E.R."/>
            <person name="Marra M.A."/>
            <person name="Miner T.L."/>
            <person name="Minx P."/>
            <person name="Mullikin J.C."/>
            <person name="Plumb R.W."/>
            <person name="Rogers J."/>
            <person name="Schein J.E."/>
            <person name="Sohrmann M."/>
            <person name="Spieth J."/>
            <person name="Stajich J.E."/>
            <person name="Wei C."/>
            <person name="Willey D."/>
            <person name="Wilson R.K."/>
            <person name="Durbin R.M."/>
            <person name="Waterston R.H."/>
        </authorList>
    </citation>
    <scope>NUCLEOTIDE SEQUENCE [LARGE SCALE GENOMIC DNA]</scope>
    <source>
        <strain>AF16</strain>
    </source>
</reference>
<accession>P0C661</accession>
<accession>A8XFM1</accession>
<keyword id="KW-0010">Activator</keyword>
<keyword id="KW-0067">ATP-binding</keyword>
<keyword id="KW-0418">Kinase</keyword>
<keyword id="KW-0547">Nucleotide-binding</keyword>
<keyword id="KW-0539">Nucleus</keyword>
<keyword id="KW-1185">Reference proteome</keyword>
<keyword id="KW-0678">Repressor</keyword>
<keyword id="KW-0723">Serine/threonine-protein kinase</keyword>
<keyword id="KW-0804">Transcription</keyword>
<keyword id="KW-0805">Transcription regulation</keyword>
<keyword id="KW-0808">Transferase</keyword>
<comment type="function">
    <text evidence="2">Component of the Mediator complex, a coactivator involved in regulated gene transcription of nearly all RNA polymerase II-dependent genes. Mediator functions as a bridge to convey information from gene-specific regulatory proteins to the basal RNA polymerase II transcription machinery. Mediator is recruited to promoters by direct interactions with regulatory proteins and serves as a scaffold for the assembly of a functional pre-initiation complex with RNA polymerase II and the general transcription factors. Phosphorylates the CTD (C-terminal domain) of the large subunit of RNA polymerase II (RNAp II), which may inhibit the formation of a transcription initiation complex (By similarity).</text>
</comment>
<comment type="catalytic activity">
    <reaction>
        <text>L-seryl-[protein] + ATP = O-phospho-L-seryl-[protein] + ADP + H(+)</text>
        <dbReference type="Rhea" id="RHEA:17989"/>
        <dbReference type="Rhea" id="RHEA-COMP:9863"/>
        <dbReference type="Rhea" id="RHEA-COMP:11604"/>
        <dbReference type="ChEBI" id="CHEBI:15378"/>
        <dbReference type="ChEBI" id="CHEBI:29999"/>
        <dbReference type="ChEBI" id="CHEBI:30616"/>
        <dbReference type="ChEBI" id="CHEBI:83421"/>
        <dbReference type="ChEBI" id="CHEBI:456216"/>
        <dbReference type="EC" id="2.7.11.22"/>
    </reaction>
</comment>
<comment type="catalytic activity">
    <reaction>
        <text>L-threonyl-[protein] + ATP = O-phospho-L-threonyl-[protein] + ADP + H(+)</text>
        <dbReference type="Rhea" id="RHEA:46608"/>
        <dbReference type="Rhea" id="RHEA-COMP:11060"/>
        <dbReference type="Rhea" id="RHEA-COMP:11605"/>
        <dbReference type="ChEBI" id="CHEBI:15378"/>
        <dbReference type="ChEBI" id="CHEBI:30013"/>
        <dbReference type="ChEBI" id="CHEBI:30616"/>
        <dbReference type="ChEBI" id="CHEBI:61977"/>
        <dbReference type="ChEBI" id="CHEBI:456216"/>
        <dbReference type="EC" id="2.7.11.22"/>
    </reaction>
</comment>
<comment type="catalytic activity">
    <reaction>
        <text>[DNA-directed RNA polymerase] + ATP = phospho-[DNA-directed RNA polymerase] + ADP + H(+)</text>
        <dbReference type="Rhea" id="RHEA:10216"/>
        <dbReference type="Rhea" id="RHEA-COMP:11321"/>
        <dbReference type="Rhea" id="RHEA-COMP:11322"/>
        <dbReference type="ChEBI" id="CHEBI:15378"/>
        <dbReference type="ChEBI" id="CHEBI:30616"/>
        <dbReference type="ChEBI" id="CHEBI:43176"/>
        <dbReference type="ChEBI" id="CHEBI:68546"/>
        <dbReference type="ChEBI" id="CHEBI:456216"/>
        <dbReference type="EC" id="2.7.11.23"/>
    </reaction>
</comment>
<comment type="cofactor">
    <cofactor evidence="1">
        <name>Mg(2+)</name>
        <dbReference type="ChEBI" id="CHEBI:18420"/>
    </cofactor>
</comment>
<comment type="subunit">
    <text evidence="1">Component of the Mediator complex.</text>
</comment>
<comment type="subcellular location">
    <subcellularLocation>
        <location evidence="6">Nucleus</location>
    </subcellularLocation>
</comment>
<comment type="similarity">
    <text evidence="6">Belongs to the protein kinase superfamily. CMGC Ser/Thr protein kinase family. CDC2/CDKX subfamily.</text>
</comment>